<comment type="function">
    <text evidence="1">Catalyzes the conversion of uracil and 5-phospho-alpha-D-ribose 1-diphosphate (PRPP) to UMP and diphosphate.</text>
</comment>
<comment type="catalytic activity">
    <reaction evidence="1">
        <text>UMP + diphosphate = 5-phospho-alpha-D-ribose 1-diphosphate + uracil</text>
        <dbReference type="Rhea" id="RHEA:13017"/>
        <dbReference type="ChEBI" id="CHEBI:17568"/>
        <dbReference type="ChEBI" id="CHEBI:33019"/>
        <dbReference type="ChEBI" id="CHEBI:57865"/>
        <dbReference type="ChEBI" id="CHEBI:58017"/>
        <dbReference type="EC" id="2.4.2.9"/>
    </reaction>
</comment>
<comment type="cofactor">
    <cofactor evidence="1">
        <name>Mg(2+)</name>
        <dbReference type="ChEBI" id="CHEBI:18420"/>
    </cofactor>
    <text evidence="1">Binds 1 Mg(2+) ion per subunit. The magnesium is bound as Mg-PRPP.</text>
</comment>
<comment type="activity regulation">
    <text evidence="1">Allosterically activated by GTP.</text>
</comment>
<comment type="pathway">
    <text evidence="1">Pyrimidine metabolism; UMP biosynthesis via salvage pathway; UMP from uracil: step 1/1.</text>
</comment>
<comment type="similarity">
    <text evidence="1">Belongs to the UPRTase family.</text>
</comment>
<reference key="1">
    <citation type="journal article" date="2005" name="Nucleic Acids Res.">
        <title>Genomic blueprint of Hahella chejuensis, a marine microbe producing an algicidal agent.</title>
        <authorList>
            <person name="Jeong H."/>
            <person name="Yim J.H."/>
            <person name="Lee C."/>
            <person name="Choi S.-H."/>
            <person name="Park Y.K."/>
            <person name="Yoon S.H."/>
            <person name="Hur C.-G."/>
            <person name="Kang H.-Y."/>
            <person name="Kim D."/>
            <person name="Lee H.H."/>
            <person name="Park K.H."/>
            <person name="Park S.-H."/>
            <person name="Park H.-S."/>
            <person name="Lee H.K."/>
            <person name="Oh T.K."/>
            <person name="Kim J.F."/>
        </authorList>
    </citation>
    <scope>NUCLEOTIDE SEQUENCE [LARGE SCALE GENOMIC DNA]</scope>
    <source>
        <strain>KCTC 2396</strain>
    </source>
</reference>
<evidence type="ECO:0000255" key="1">
    <source>
        <dbReference type="HAMAP-Rule" id="MF_01218"/>
    </source>
</evidence>
<feature type="chain" id="PRO_1000053725" description="Uracil phosphoribosyltransferase">
    <location>
        <begin position="1"/>
        <end position="211"/>
    </location>
</feature>
<feature type="binding site" evidence="1">
    <location>
        <position position="78"/>
    </location>
    <ligand>
        <name>5-phospho-alpha-D-ribose 1-diphosphate</name>
        <dbReference type="ChEBI" id="CHEBI:58017"/>
    </ligand>
</feature>
<feature type="binding site" evidence="1">
    <location>
        <position position="103"/>
    </location>
    <ligand>
        <name>5-phospho-alpha-D-ribose 1-diphosphate</name>
        <dbReference type="ChEBI" id="CHEBI:58017"/>
    </ligand>
</feature>
<feature type="binding site" evidence="1">
    <location>
        <begin position="130"/>
        <end position="138"/>
    </location>
    <ligand>
        <name>5-phospho-alpha-D-ribose 1-diphosphate</name>
        <dbReference type="ChEBI" id="CHEBI:58017"/>
    </ligand>
</feature>
<feature type="binding site" evidence="1">
    <location>
        <position position="193"/>
    </location>
    <ligand>
        <name>uracil</name>
        <dbReference type="ChEBI" id="CHEBI:17568"/>
    </ligand>
</feature>
<feature type="binding site" evidence="1">
    <location>
        <begin position="198"/>
        <end position="200"/>
    </location>
    <ligand>
        <name>uracil</name>
        <dbReference type="ChEBI" id="CHEBI:17568"/>
    </ligand>
</feature>
<feature type="binding site" evidence="1">
    <location>
        <position position="199"/>
    </location>
    <ligand>
        <name>5-phospho-alpha-D-ribose 1-diphosphate</name>
        <dbReference type="ChEBI" id="CHEBI:58017"/>
    </ligand>
</feature>
<name>UPP_HAHCH</name>
<keyword id="KW-0021">Allosteric enzyme</keyword>
<keyword id="KW-0328">Glycosyltransferase</keyword>
<keyword id="KW-0342">GTP-binding</keyword>
<keyword id="KW-0460">Magnesium</keyword>
<keyword id="KW-0547">Nucleotide-binding</keyword>
<keyword id="KW-1185">Reference proteome</keyword>
<keyword id="KW-0808">Transferase</keyword>
<organism>
    <name type="scientific">Hahella chejuensis (strain KCTC 2396)</name>
    <dbReference type="NCBI Taxonomy" id="349521"/>
    <lineage>
        <taxon>Bacteria</taxon>
        <taxon>Pseudomonadati</taxon>
        <taxon>Pseudomonadota</taxon>
        <taxon>Gammaproteobacteria</taxon>
        <taxon>Oceanospirillales</taxon>
        <taxon>Hahellaceae</taxon>
        <taxon>Hahella</taxon>
    </lineage>
</organism>
<dbReference type="EC" id="2.4.2.9" evidence="1"/>
<dbReference type="EMBL" id="CP000155">
    <property type="protein sequence ID" value="ABC27968.1"/>
    <property type="molecule type" value="Genomic_DNA"/>
</dbReference>
<dbReference type="RefSeq" id="WP_011395043.1">
    <property type="nucleotide sequence ID" value="NC_007645.1"/>
</dbReference>
<dbReference type="SMR" id="Q2SN06"/>
<dbReference type="STRING" id="349521.HCH_01088"/>
<dbReference type="KEGG" id="hch:HCH_01088"/>
<dbReference type="eggNOG" id="COG0035">
    <property type="taxonomic scope" value="Bacteria"/>
</dbReference>
<dbReference type="HOGENOM" id="CLU_067096_2_2_6"/>
<dbReference type="OrthoDB" id="9781675at2"/>
<dbReference type="UniPathway" id="UPA00574">
    <property type="reaction ID" value="UER00636"/>
</dbReference>
<dbReference type="Proteomes" id="UP000000238">
    <property type="component" value="Chromosome"/>
</dbReference>
<dbReference type="GO" id="GO:0005525">
    <property type="term" value="F:GTP binding"/>
    <property type="evidence" value="ECO:0007669"/>
    <property type="project" value="UniProtKB-KW"/>
</dbReference>
<dbReference type="GO" id="GO:0000287">
    <property type="term" value="F:magnesium ion binding"/>
    <property type="evidence" value="ECO:0007669"/>
    <property type="project" value="UniProtKB-UniRule"/>
</dbReference>
<dbReference type="GO" id="GO:0004845">
    <property type="term" value="F:uracil phosphoribosyltransferase activity"/>
    <property type="evidence" value="ECO:0007669"/>
    <property type="project" value="UniProtKB-UniRule"/>
</dbReference>
<dbReference type="GO" id="GO:0044206">
    <property type="term" value="P:UMP salvage"/>
    <property type="evidence" value="ECO:0007669"/>
    <property type="project" value="UniProtKB-UniRule"/>
</dbReference>
<dbReference type="GO" id="GO:0006223">
    <property type="term" value="P:uracil salvage"/>
    <property type="evidence" value="ECO:0007669"/>
    <property type="project" value="InterPro"/>
</dbReference>
<dbReference type="CDD" id="cd06223">
    <property type="entry name" value="PRTases_typeI"/>
    <property type="match status" value="1"/>
</dbReference>
<dbReference type="FunFam" id="3.40.50.2020:FF:000003">
    <property type="entry name" value="Uracil phosphoribosyltransferase"/>
    <property type="match status" value="1"/>
</dbReference>
<dbReference type="Gene3D" id="3.40.50.2020">
    <property type="match status" value="1"/>
</dbReference>
<dbReference type="HAMAP" id="MF_01218_B">
    <property type="entry name" value="Upp_B"/>
    <property type="match status" value="1"/>
</dbReference>
<dbReference type="InterPro" id="IPR000836">
    <property type="entry name" value="PRibTrfase_dom"/>
</dbReference>
<dbReference type="InterPro" id="IPR029057">
    <property type="entry name" value="PRTase-like"/>
</dbReference>
<dbReference type="InterPro" id="IPR034332">
    <property type="entry name" value="Upp_B"/>
</dbReference>
<dbReference type="InterPro" id="IPR050054">
    <property type="entry name" value="UPRTase/APRTase"/>
</dbReference>
<dbReference type="InterPro" id="IPR005765">
    <property type="entry name" value="Ura_phspho_trans"/>
</dbReference>
<dbReference type="NCBIfam" id="NF001097">
    <property type="entry name" value="PRK00129.1"/>
    <property type="match status" value="1"/>
</dbReference>
<dbReference type="NCBIfam" id="TIGR01091">
    <property type="entry name" value="upp"/>
    <property type="match status" value="1"/>
</dbReference>
<dbReference type="PANTHER" id="PTHR32315">
    <property type="entry name" value="ADENINE PHOSPHORIBOSYLTRANSFERASE"/>
    <property type="match status" value="1"/>
</dbReference>
<dbReference type="PANTHER" id="PTHR32315:SF4">
    <property type="entry name" value="URACIL PHOSPHORIBOSYLTRANSFERASE, CHLOROPLASTIC"/>
    <property type="match status" value="1"/>
</dbReference>
<dbReference type="Pfam" id="PF14681">
    <property type="entry name" value="UPRTase"/>
    <property type="match status" value="1"/>
</dbReference>
<dbReference type="SUPFAM" id="SSF53271">
    <property type="entry name" value="PRTase-like"/>
    <property type="match status" value="1"/>
</dbReference>
<sequence>MPTHEIRHPLVRHKIGLMRRAEISTKSFRELAQEVGALLTYEASKDFNLGTEVVQGWAGPVEVEKLKGKKVTVVPILRAGLGMLDGVLSLIPAAKVSVVGQVRNEETLEAKTYLEKLVGELDQRLALIIDPMLATGGSMISTIDLLKKAGCSEIRALVLVAAPEGIAAVEKAHPDVHIYTAAIDERLNEKGYILPGLGDAGDRIFGTKQKS</sequence>
<protein>
    <recommendedName>
        <fullName evidence="1">Uracil phosphoribosyltransferase</fullName>
        <ecNumber evidence="1">2.4.2.9</ecNumber>
    </recommendedName>
    <alternativeName>
        <fullName evidence="1">UMP pyrophosphorylase</fullName>
    </alternativeName>
    <alternativeName>
        <fullName evidence="1">UPRTase</fullName>
    </alternativeName>
</protein>
<proteinExistence type="inferred from homology"/>
<accession>Q2SN06</accession>
<gene>
    <name evidence="1" type="primary">upp</name>
    <name type="ordered locus">HCH_01088</name>
</gene>